<evidence type="ECO:0000255" key="1">
    <source>
        <dbReference type="HAMAP-Rule" id="MF_00406"/>
    </source>
</evidence>
<accession>C1DST5</accession>
<feature type="chain" id="PRO_1000205938" description="3-hydroxyacyl-[acyl-carrier-protein] dehydratase FabZ">
    <location>
        <begin position="1"/>
        <end position="146"/>
    </location>
</feature>
<feature type="active site" evidence="1">
    <location>
        <position position="49"/>
    </location>
</feature>
<protein>
    <recommendedName>
        <fullName evidence="1">3-hydroxyacyl-[acyl-carrier-protein] dehydratase FabZ</fullName>
        <ecNumber evidence="1">4.2.1.59</ecNumber>
    </recommendedName>
    <alternativeName>
        <fullName evidence="1">(3R)-hydroxymyristoyl-[acyl-carrier-protein] dehydratase</fullName>
        <shortName evidence="1">(3R)-hydroxymyristoyl-ACP dehydrase</shortName>
    </alternativeName>
    <alternativeName>
        <fullName evidence="1">Beta-hydroxyacyl-ACP dehydratase</fullName>
    </alternativeName>
</protein>
<keyword id="KW-0963">Cytoplasm</keyword>
<keyword id="KW-0441">Lipid A biosynthesis</keyword>
<keyword id="KW-0444">Lipid biosynthesis</keyword>
<keyword id="KW-0443">Lipid metabolism</keyword>
<keyword id="KW-0456">Lyase</keyword>
<comment type="function">
    <text evidence="1">Involved in unsaturated fatty acids biosynthesis. Catalyzes the dehydration of short chain beta-hydroxyacyl-ACPs and long chain saturated and unsaturated beta-hydroxyacyl-ACPs.</text>
</comment>
<comment type="catalytic activity">
    <reaction evidence="1">
        <text>a (3R)-hydroxyacyl-[ACP] = a (2E)-enoyl-[ACP] + H2O</text>
        <dbReference type="Rhea" id="RHEA:13097"/>
        <dbReference type="Rhea" id="RHEA-COMP:9925"/>
        <dbReference type="Rhea" id="RHEA-COMP:9945"/>
        <dbReference type="ChEBI" id="CHEBI:15377"/>
        <dbReference type="ChEBI" id="CHEBI:78784"/>
        <dbReference type="ChEBI" id="CHEBI:78827"/>
        <dbReference type="EC" id="4.2.1.59"/>
    </reaction>
</comment>
<comment type="subcellular location">
    <subcellularLocation>
        <location evidence="1">Cytoplasm</location>
    </subcellularLocation>
</comment>
<comment type="similarity">
    <text evidence="1">Belongs to the thioester dehydratase family. FabZ subfamily.</text>
</comment>
<organism>
    <name type="scientific">Azotobacter vinelandii (strain DJ / ATCC BAA-1303)</name>
    <dbReference type="NCBI Taxonomy" id="322710"/>
    <lineage>
        <taxon>Bacteria</taxon>
        <taxon>Pseudomonadati</taxon>
        <taxon>Pseudomonadota</taxon>
        <taxon>Gammaproteobacteria</taxon>
        <taxon>Pseudomonadales</taxon>
        <taxon>Pseudomonadaceae</taxon>
        <taxon>Azotobacter</taxon>
    </lineage>
</organism>
<gene>
    <name evidence="1" type="primary">fabZ</name>
    <name type="ordered locus">Avin_38880</name>
</gene>
<name>FABZ_AZOVD</name>
<sequence>MMDINEIREYLPHRYPFLLVDRVVDLDVEGQRIRAYKNVSINEPFFNGHFPQHPIMPGVLIIEAMAQAAGILGFKMLDVKPADGTIYYFVGSDKMRFRQPVIPGDQLILEARFLSAKRSIWKFECQALVDDKQVCSGEIICAERKL</sequence>
<reference key="1">
    <citation type="journal article" date="2009" name="J. Bacteriol.">
        <title>Genome sequence of Azotobacter vinelandii, an obligate aerobe specialized to support diverse anaerobic metabolic processes.</title>
        <authorList>
            <person name="Setubal J.C."/>
            <person name="Dos Santos P."/>
            <person name="Goldman B.S."/>
            <person name="Ertesvaag H."/>
            <person name="Espin G."/>
            <person name="Rubio L.M."/>
            <person name="Valla S."/>
            <person name="Almeida N.F."/>
            <person name="Balasubramanian D."/>
            <person name="Cromes L."/>
            <person name="Curatti L."/>
            <person name="Du Z."/>
            <person name="Godsy E."/>
            <person name="Goodner B."/>
            <person name="Hellner-Burris K."/>
            <person name="Hernandez J.A."/>
            <person name="Houmiel K."/>
            <person name="Imperial J."/>
            <person name="Kennedy C."/>
            <person name="Larson T.J."/>
            <person name="Latreille P."/>
            <person name="Ligon L.S."/>
            <person name="Lu J."/>
            <person name="Maerk M."/>
            <person name="Miller N.M."/>
            <person name="Norton S."/>
            <person name="O'Carroll I.P."/>
            <person name="Paulsen I."/>
            <person name="Raulfs E.C."/>
            <person name="Roemer R."/>
            <person name="Rosser J."/>
            <person name="Segura D."/>
            <person name="Slater S."/>
            <person name="Stricklin S.L."/>
            <person name="Studholme D.J."/>
            <person name="Sun J."/>
            <person name="Viana C.J."/>
            <person name="Wallin E."/>
            <person name="Wang B."/>
            <person name="Wheeler C."/>
            <person name="Zhu H."/>
            <person name="Dean D.R."/>
            <person name="Dixon R."/>
            <person name="Wood D."/>
        </authorList>
    </citation>
    <scope>NUCLEOTIDE SEQUENCE [LARGE SCALE GENOMIC DNA]</scope>
    <source>
        <strain>DJ / ATCC BAA-1303</strain>
    </source>
</reference>
<dbReference type="EC" id="4.2.1.59" evidence="1"/>
<dbReference type="EMBL" id="CP001157">
    <property type="protein sequence ID" value="ACO80028.1"/>
    <property type="molecule type" value="Genomic_DNA"/>
</dbReference>
<dbReference type="RefSeq" id="WP_012702403.1">
    <property type="nucleotide sequence ID" value="NC_012560.1"/>
</dbReference>
<dbReference type="SMR" id="C1DST5"/>
<dbReference type="STRING" id="322710.Avin_38880"/>
<dbReference type="EnsemblBacteria" id="ACO80028">
    <property type="protein sequence ID" value="ACO80028"/>
    <property type="gene ID" value="Avin_38880"/>
</dbReference>
<dbReference type="GeneID" id="88186846"/>
<dbReference type="KEGG" id="avn:Avin_38880"/>
<dbReference type="eggNOG" id="COG0764">
    <property type="taxonomic scope" value="Bacteria"/>
</dbReference>
<dbReference type="HOGENOM" id="CLU_078912_1_0_6"/>
<dbReference type="OrthoDB" id="9772788at2"/>
<dbReference type="Proteomes" id="UP000002424">
    <property type="component" value="Chromosome"/>
</dbReference>
<dbReference type="GO" id="GO:0005737">
    <property type="term" value="C:cytoplasm"/>
    <property type="evidence" value="ECO:0007669"/>
    <property type="project" value="UniProtKB-SubCell"/>
</dbReference>
<dbReference type="GO" id="GO:0016020">
    <property type="term" value="C:membrane"/>
    <property type="evidence" value="ECO:0007669"/>
    <property type="project" value="GOC"/>
</dbReference>
<dbReference type="GO" id="GO:0019171">
    <property type="term" value="F:(3R)-hydroxyacyl-[acyl-carrier-protein] dehydratase activity"/>
    <property type="evidence" value="ECO:0007669"/>
    <property type="project" value="UniProtKB-EC"/>
</dbReference>
<dbReference type="GO" id="GO:0006633">
    <property type="term" value="P:fatty acid biosynthetic process"/>
    <property type="evidence" value="ECO:0007669"/>
    <property type="project" value="UniProtKB-UniRule"/>
</dbReference>
<dbReference type="GO" id="GO:0009245">
    <property type="term" value="P:lipid A biosynthetic process"/>
    <property type="evidence" value="ECO:0007669"/>
    <property type="project" value="UniProtKB-UniRule"/>
</dbReference>
<dbReference type="CDD" id="cd01288">
    <property type="entry name" value="FabZ"/>
    <property type="match status" value="1"/>
</dbReference>
<dbReference type="FunFam" id="3.10.129.10:FF:000001">
    <property type="entry name" value="3-hydroxyacyl-[acyl-carrier-protein] dehydratase FabZ"/>
    <property type="match status" value="1"/>
</dbReference>
<dbReference type="Gene3D" id="3.10.129.10">
    <property type="entry name" value="Hotdog Thioesterase"/>
    <property type="match status" value="1"/>
</dbReference>
<dbReference type="HAMAP" id="MF_00406">
    <property type="entry name" value="FabZ"/>
    <property type="match status" value="1"/>
</dbReference>
<dbReference type="InterPro" id="IPR013114">
    <property type="entry name" value="FabA_FabZ"/>
</dbReference>
<dbReference type="InterPro" id="IPR010084">
    <property type="entry name" value="FabZ"/>
</dbReference>
<dbReference type="InterPro" id="IPR029069">
    <property type="entry name" value="HotDog_dom_sf"/>
</dbReference>
<dbReference type="NCBIfam" id="TIGR01750">
    <property type="entry name" value="fabZ"/>
    <property type="match status" value="1"/>
</dbReference>
<dbReference type="NCBIfam" id="NF000582">
    <property type="entry name" value="PRK00006.1"/>
    <property type="match status" value="1"/>
</dbReference>
<dbReference type="PANTHER" id="PTHR30272">
    <property type="entry name" value="3-HYDROXYACYL-[ACYL-CARRIER-PROTEIN] DEHYDRATASE"/>
    <property type="match status" value="1"/>
</dbReference>
<dbReference type="PANTHER" id="PTHR30272:SF1">
    <property type="entry name" value="3-HYDROXYACYL-[ACYL-CARRIER-PROTEIN] DEHYDRATASE"/>
    <property type="match status" value="1"/>
</dbReference>
<dbReference type="Pfam" id="PF07977">
    <property type="entry name" value="FabA"/>
    <property type="match status" value="1"/>
</dbReference>
<dbReference type="SUPFAM" id="SSF54637">
    <property type="entry name" value="Thioesterase/thiol ester dehydrase-isomerase"/>
    <property type="match status" value="1"/>
</dbReference>
<proteinExistence type="inferred from homology"/>